<proteinExistence type="inferred from homology"/>
<reference key="1">
    <citation type="journal article" date="2004" name="Genome Res.">
        <title>The complete genome and proteome of Mycoplasma mobile.</title>
        <authorList>
            <person name="Jaffe J.D."/>
            <person name="Stange-Thomann N."/>
            <person name="Smith C."/>
            <person name="DeCaprio D."/>
            <person name="Fisher S."/>
            <person name="Butler J."/>
            <person name="Calvo S."/>
            <person name="Elkins T."/>
            <person name="FitzGerald M.G."/>
            <person name="Hafez N."/>
            <person name="Kodira C.D."/>
            <person name="Major J."/>
            <person name="Wang S."/>
            <person name="Wilkinson J."/>
            <person name="Nicol R."/>
            <person name="Nusbaum C."/>
            <person name="Birren B."/>
            <person name="Berg H.C."/>
            <person name="Church G.M."/>
        </authorList>
    </citation>
    <scope>NUCLEOTIDE SEQUENCE [LARGE SCALE GENOMIC DNA]</scope>
    <source>
        <strain>ATCC 43663 / NCTC 11711 / 163 K</strain>
    </source>
</reference>
<protein>
    <recommendedName>
        <fullName evidence="1">Chaperone protein DnaK</fullName>
    </recommendedName>
    <alternativeName>
        <fullName evidence="1">HSP70</fullName>
    </alternativeName>
    <alternativeName>
        <fullName evidence="1">Heat shock 70 kDa protein</fullName>
    </alternativeName>
    <alternativeName>
        <fullName evidence="1">Heat shock protein 70</fullName>
    </alternativeName>
</protein>
<sequence>MAKEKIIGIDLGTTNSVVAILEDKTPRVLENPNGKRTTPSVVSFKNDDIIVGEVAKRQLETNINTIASIKRKMGTSETVKINDKEYKPEEISAMILSYLKDYAEKKIGSKIKKAVITVPAYFNNAQREATKTAGRIAGLSVERIINEPTAAALAFGLDKTDKEQKILVYDLGGGTFDVSVLELANGTFEVLSTSGDNFLGGDDWDNEIVKWLIGKIKLEHKYDVSKDKMAMARLKEEAEKAKINLSTTSTTSINLPFLAVTDSGPINVEVELKRSDFEKMTQHLVERTRKPVRDALKEAKLKSEDLHEVLLVGGSTRIPAVQEMLQHELNKKPNHSINPDEVVAIGAAIQGAVLSGDINDVLLLDVTPLTLGIETQGGIATPLIQRNTTIPTTKSQIFSTAADNQSEVTINVVQGERQMAADNKSLGQFNLGGIEKAPRGTPQIEVSFSIDVNGIIKVSATDKKTNKIQTITIENSTSLTEEEIKKMIDDAEKNKEADAKKKEKIDVTVRAETLINQLEKTIKDQGDKIDPKEKEQTEKEITNIKDLILQDKIDELKIKLDQIEEVAKAFAQKAASKETSKNEQNEDGSIDAEIKEEDPKA</sequence>
<gene>
    <name evidence="1" type="primary">dnaK</name>
    <name type="ordered locus">MMOB1130</name>
</gene>
<feature type="chain" id="PRO_0000225981" description="Chaperone protein DnaK">
    <location>
        <begin position="1"/>
        <end position="601"/>
    </location>
</feature>
<feature type="region of interest" description="Disordered" evidence="2">
    <location>
        <begin position="570"/>
        <end position="601"/>
    </location>
</feature>
<feature type="compositionally biased region" description="Basic and acidic residues" evidence="2">
    <location>
        <begin position="575"/>
        <end position="584"/>
    </location>
</feature>
<feature type="compositionally biased region" description="Acidic residues" evidence="2">
    <location>
        <begin position="585"/>
        <end position="601"/>
    </location>
</feature>
<feature type="modified residue" description="Phosphothreonine; by autocatalysis" evidence="1">
    <location>
        <position position="175"/>
    </location>
</feature>
<dbReference type="EMBL" id="AE017308">
    <property type="protein sequence ID" value="AAT27599.1"/>
    <property type="molecule type" value="Genomic_DNA"/>
</dbReference>
<dbReference type="RefSeq" id="WP_011264633.1">
    <property type="nucleotide sequence ID" value="NC_006908.1"/>
</dbReference>
<dbReference type="SMR" id="Q6KIH7"/>
<dbReference type="STRING" id="267748.MMOB1130"/>
<dbReference type="KEGG" id="mmo:MMOB1130"/>
<dbReference type="eggNOG" id="COG0443">
    <property type="taxonomic scope" value="Bacteria"/>
</dbReference>
<dbReference type="HOGENOM" id="CLU_005965_2_4_14"/>
<dbReference type="OrthoDB" id="9766019at2"/>
<dbReference type="Proteomes" id="UP000009072">
    <property type="component" value="Chromosome"/>
</dbReference>
<dbReference type="GO" id="GO:0005524">
    <property type="term" value="F:ATP binding"/>
    <property type="evidence" value="ECO:0007669"/>
    <property type="project" value="UniProtKB-UniRule"/>
</dbReference>
<dbReference type="GO" id="GO:0140662">
    <property type="term" value="F:ATP-dependent protein folding chaperone"/>
    <property type="evidence" value="ECO:0007669"/>
    <property type="project" value="InterPro"/>
</dbReference>
<dbReference type="GO" id="GO:0051082">
    <property type="term" value="F:unfolded protein binding"/>
    <property type="evidence" value="ECO:0007669"/>
    <property type="project" value="InterPro"/>
</dbReference>
<dbReference type="CDD" id="cd10234">
    <property type="entry name" value="ASKHA_NBD_HSP70_DnaK-like"/>
    <property type="match status" value="1"/>
</dbReference>
<dbReference type="FunFam" id="2.60.34.10:FF:000014">
    <property type="entry name" value="Chaperone protein DnaK HSP70"/>
    <property type="match status" value="1"/>
</dbReference>
<dbReference type="FunFam" id="3.30.420.40:FF:000071">
    <property type="entry name" value="Molecular chaperone DnaK"/>
    <property type="match status" value="1"/>
</dbReference>
<dbReference type="FunFam" id="3.90.640.10:FF:000003">
    <property type="entry name" value="Molecular chaperone DnaK"/>
    <property type="match status" value="1"/>
</dbReference>
<dbReference type="Gene3D" id="1.20.1270.10">
    <property type="match status" value="1"/>
</dbReference>
<dbReference type="Gene3D" id="3.30.420.40">
    <property type="match status" value="2"/>
</dbReference>
<dbReference type="Gene3D" id="3.90.640.10">
    <property type="entry name" value="Actin, Chain A, domain 4"/>
    <property type="match status" value="1"/>
</dbReference>
<dbReference type="Gene3D" id="2.60.34.10">
    <property type="entry name" value="Substrate Binding Domain Of DNAk, Chain A, domain 1"/>
    <property type="match status" value="1"/>
</dbReference>
<dbReference type="HAMAP" id="MF_00332">
    <property type="entry name" value="DnaK"/>
    <property type="match status" value="1"/>
</dbReference>
<dbReference type="InterPro" id="IPR043129">
    <property type="entry name" value="ATPase_NBD"/>
</dbReference>
<dbReference type="InterPro" id="IPR012725">
    <property type="entry name" value="Chaperone_DnaK"/>
</dbReference>
<dbReference type="InterPro" id="IPR018181">
    <property type="entry name" value="Heat_shock_70_CS"/>
</dbReference>
<dbReference type="InterPro" id="IPR029048">
    <property type="entry name" value="HSP70_C_sf"/>
</dbReference>
<dbReference type="InterPro" id="IPR029047">
    <property type="entry name" value="HSP70_peptide-bd_sf"/>
</dbReference>
<dbReference type="InterPro" id="IPR013126">
    <property type="entry name" value="Hsp_70_fam"/>
</dbReference>
<dbReference type="NCBIfam" id="NF001413">
    <property type="entry name" value="PRK00290.1"/>
    <property type="match status" value="1"/>
</dbReference>
<dbReference type="NCBIfam" id="TIGR02350">
    <property type="entry name" value="prok_dnaK"/>
    <property type="match status" value="1"/>
</dbReference>
<dbReference type="PANTHER" id="PTHR19375">
    <property type="entry name" value="HEAT SHOCK PROTEIN 70KDA"/>
    <property type="match status" value="1"/>
</dbReference>
<dbReference type="Pfam" id="PF00012">
    <property type="entry name" value="HSP70"/>
    <property type="match status" value="2"/>
</dbReference>
<dbReference type="PRINTS" id="PR00301">
    <property type="entry name" value="HEATSHOCK70"/>
</dbReference>
<dbReference type="SUPFAM" id="SSF53067">
    <property type="entry name" value="Actin-like ATPase domain"/>
    <property type="match status" value="2"/>
</dbReference>
<dbReference type="SUPFAM" id="SSF100934">
    <property type="entry name" value="Heat shock protein 70kD (HSP70), C-terminal subdomain"/>
    <property type="match status" value="1"/>
</dbReference>
<dbReference type="SUPFAM" id="SSF100920">
    <property type="entry name" value="Heat shock protein 70kD (HSP70), peptide-binding domain"/>
    <property type="match status" value="1"/>
</dbReference>
<dbReference type="PROSITE" id="PS00297">
    <property type="entry name" value="HSP70_1"/>
    <property type="match status" value="1"/>
</dbReference>
<dbReference type="PROSITE" id="PS00329">
    <property type="entry name" value="HSP70_2"/>
    <property type="match status" value="1"/>
</dbReference>
<dbReference type="PROSITE" id="PS01036">
    <property type="entry name" value="HSP70_3"/>
    <property type="match status" value="1"/>
</dbReference>
<comment type="function">
    <text evidence="1">Acts as a chaperone.</text>
</comment>
<comment type="induction">
    <text evidence="1">By stress conditions e.g. heat shock.</text>
</comment>
<comment type="similarity">
    <text evidence="1">Belongs to the heat shock protein 70 family.</text>
</comment>
<name>DNAK_MYCM1</name>
<accession>Q6KIH7</accession>
<organism>
    <name type="scientific">Mycoplasma mobile (strain ATCC 43663 / 163K / NCTC 11711)</name>
    <name type="common">Mesomycoplasma mobile</name>
    <dbReference type="NCBI Taxonomy" id="267748"/>
    <lineage>
        <taxon>Bacteria</taxon>
        <taxon>Bacillati</taxon>
        <taxon>Mycoplasmatota</taxon>
        <taxon>Mycoplasmoidales</taxon>
        <taxon>Metamycoplasmataceae</taxon>
        <taxon>Mesomycoplasma</taxon>
    </lineage>
</organism>
<evidence type="ECO:0000255" key="1">
    <source>
        <dbReference type="HAMAP-Rule" id="MF_00332"/>
    </source>
</evidence>
<evidence type="ECO:0000256" key="2">
    <source>
        <dbReference type="SAM" id="MobiDB-lite"/>
    </source>
</evidence>
<keyword id="KW-0067">ATP-binding</keyword>
<keyword id="KW-0143">Chaperone</keyword>
<keyword id="KW-0547">Nucleotide-binding</keyword>
<keyword id="KW-0597">Phosphoprotein</keyword>
<keyword id="KW-1185">Reference proteome</keyword>
<keyword id="KW-0346">Stress response</keyword>